<protein>
    <recommendedName>
        <fullName>Molybdate/tungstate-binding protein WtpA</fullName>
    </recommendedName>
</protein>
<feature type="signal peptide" evidence="1">
    <location>
        <begin position="1"/>
        <end position="24"/>
    </location>
</feature>
<feature type="chain" id="PRO_0000159717" description="Molybdate/tungstate-binding protein WtpA">
    <location>
        <begin position="25"/>
        <end position="342"/>
    </location>
</feature>
<feature type="binding site" evidence="2 5">
    <location>
        <begin position="41"/>
        <end position="42"/>
    </location>
    <ligand>
        <name>molybdate</name>
        <dbReference type="ChEBI" id="CHEBI:36264"/>
    </ligand>
</feature>
<feature type="binding site" evidence="2 4">
    <location>
        <begin position="41"/>
        <end position="42"/>
    </location>
    <ligand>
        <name>tungstate</name>
        <dbReference type="ChEBI" id="CHEBI:46502"/>
    </ligand>
</feature>
<feature type="binding site" evidence="2 5">
    <location>
        <position position="70"/>
    </location>
    <ligand>
        <name>molybdate</name>
        <dbReference type="ChEBI" id="CHEBI:36264"/>
    </ligand>
</feature>
<feature type="binding site" evidence="2 4">
    <location>
        <position position="70"/>
    </location>
    <ligand>
        <name>tungstate</name>
        <dbReference type="ChEBI" id="CHEBI:46502"/>
    </ligand>
</feature>
<feature type="binding site" evidence="2 5">
    <location>
        <begin position="153"/>
        <end position="155"/>
    </location>
    <ligand>
        <name>molybdate</name>
        <dbReference type="ChEBI" id="CHEBI:36264"/>
    </ligand>
</feature>
<feature type="binding site" evidence="2 4">
    <location>
        <begin position="153"/>
        <end position="155"/>
    </location>
    <ligand>
        <name>tungstate</name>
        <dbReference type="ChEBI" id="CHEBI:46502"/>
    </ligand>
</feature>
<feature type="binding site" evidence="2 5">
    <location>
        <position position="218"/>
    </location>
    <ligand>
        <name>molybdate</name>
        <dbReference type="ChEBI" id="CHEBI:36264"/>
    </ligand>
</feature>
<feature type="binding site" evidence="2 4">
    <location>
        <position position="218"/>
    </location>
    <ligand>
        <name>tungstate</name>
        <dbReference type="ChEBI" id="CHEBI:46502"/>
    </ligand>
</feature>
<feature type="binding site" evidence="2 5">
    <location>
        <position position="236"/>
    </location>
    <ligand>
        <name>molybdate</name>
        <dbReference type="ChEBI" id="CHEBI:36264"/>
    </ligand>
</feature>
<feature type="binding site" evidence="2 4">
    <location>
        <position position="236"/>
    </location>
    <ligand>
        <name>tungstate</name>
        <dbReference type="ChEBI" id="CHEBI:46502"/>
    </ligand>
</feature>
<feature type="strand" evidence="9">
    <location>
        <begin position="34"/>
        <end position="40"/>
    </location>
</feature>
<feature type="helix" evidence="9">
    <location>
        <begin position="41"/>
        <end position="43"/>
    </location>
</feature>
<feature type="helix" evidence="9">
    <location>
        <begin position="44"/>
        <end position="57"/>
    </location>
</feature>
<feature type="strand" evidence="9">
    <location>
        <begin position="62"/>
        <end position="68"/>
    </location>
</feature>
<feature type="helix" evidence="9">
    <location>
        <begin position="70"/>
        <end position="78"/>
    </location>
</feature>
<feature type="strand" evidence="9">
    <location>
        <begin position="85"/>
        <end position="91"/>
    </location>
</feature>
<feature type="helix" evidence="9">
    <location>
        <begin position="93"/>
        <end position="99"/>
    </location>
</feature>
<feature type="turn" evidence="9">
    <location>
        <begin position="100"/>
        <end position="103"/>
    </location>
</feature>
<feature type="strand" evidence="9">
    <location>
        <begin position="108"/>
        <end position="112"/>
    </location>
</feature>
<feature type="strand" evidence="9">
    <location>
        <begin position="115"/>
        <end position="119"/>
    </location>
</feature>
<feature type="turn" evidence="9">
    <location>
        <begin position="124"/>
        <end position="128"/>
    </location>
</feature>
<feature type="turn" evidence="9">
    <location>
        <begin position="131"/>
        <end position="133"/>
    </location>
</feature>
<feature type="helix" evidence="9">
    <location>
        <begin position="134"/>
        <end position="138"/>
    </location>
</feature>
<feature type="strand" evidence="9">
    <location>
        <begin position="145"/>
        <end position="148"/>
    </location>
</feature>
<feature type="turn" evidence="9">
    <location>
        <begin position="150"/>
        <end position="152"/>
    </location>
</feature>
<feature type="helix" evidence="9">
    <location>
        <begin position="154"/>
        <end position="169"/>
    </location>
</feature>
<feature type="helix" evidence="9">
    <location>
        <begin position="175"/>
        <end position="179"/>
    </location>
</feature>
<feature type="helix" evidence="9">
    <location>
        <begin position="181"/>
        <end position="183"/>
    </location>
</feature>
<feature type="strand" evidence="9">
    <location>
        <begin position="188"/>
        <end position="191"/>
    </location>
</feature>
<feature type="strand" evidence="9">
    <location>
        <begin position="194"/>
        <end position="198"/>
    </location>
</feature>
<feature type="helix" evidence="9">
    <location>
        <begin position="202"/>
        <end position="204"/>
    </location>
</feature>
<feature type="turn" evidence="9">
    <location>
        <begin position="209"/>
        <end position="211"/>
    </location>
</feature>
<feature type="strand" evidence="9">
    <location>
        <begin position="212"/>
        <end position="217"/>
    </location>
</feature>
<feature type="helix" evidence="9">
    <location>
        <begin position="219"/>
        <end position="226"/>
    </location>
</feature>
<feature type="strand" evidence="9">
    <location>
        <begin position="231"/>
        <end position="236"/>
    </location>
</feature>
<feature type="helix" evidence="9">
    <location>
        <begin position="237"/>
        <end position="242"/>
    </location>
</feature>
<feature type="strand" evidence="9">
    <location>
        <begin position="246"/>
        <end position="249"/>
    </location>
</feature>
<feature type="turn" evidence="9">
    <location>
        <begin position="252"/>
        <end position="254"/>
    </location>
</feature>
<feature type="helix" evidence="9">
    <location>
        <begin position="259"/>
        <end position="261"/>
    </location>
</feature>
<feature type="helix" evidence="9">
    <location>
        <begin position="262"/>
        <end position="265"/>
    </location>
</feature>
<feature type="strand" evidence="9">
    <location>
        <begin position="268"/>
        <end position="271"/>
    </location>
</feature>
<feature type="turn" evidence="7">
    <location>
        <begin position="273"/>
        <end position="275"/>
    </location>
</feature>
<feature type="strand" evidence="9">
    <location>
        <begin position="277"/>
        <end position="279"/>
    </location>
</feature>
<feature type="strand" evidence="9">
    <location>
        <begin position="284"/>
        <end position="288"/>
    </location>
</feature>
<feature type="helix" evidence="9">
    <location>
        <begin position="296"/>
        <end position="307"/>
    </location>
</feature>
<feature type="helix" evidence="9">
    <location>
        <begin position="309"/>
        <end position="317"/>
    </location>
</feature>
<feature type="strand" evidence="8">
    <location>
        <begin position="322"/>
        <end position="330"/>
    </location>
</feature>
<feature type="helix" evidence="8">
    <location>
        <begin position="333"/>
        <end position="335"/>
    </location>
</feature>
<feature type="turn" evidence="8">
    <location>
        <begin position="336"/>
        <end position="338"/>
    </location>
</feature>
<name>WTPA_ARCFU</name>
<evidence type="ECO:0000255" key="1"/>
<evidence type="ECO:0000269" key="2">
    <source>
    </source>
</evidence>
<evidence type="ECO:0000305" key="3"/>
<evidence type="ECO:0007744" key="4">
    <source>
        <dbReference type="PDB" id="2ONK"/>
    </source>
</evidence>
<evidence type="ECO:0007744" key="5">
    <source>
        <dbReference type="PDB" id="2ONR"/>
    </source>
</evidence>
<evidence type="ECO:0007744" key="6">
    <source>
        <dbReference type="PDB" id="2ONS"/>
    </source>
</evidence>
<evidence type="ECO:0007829" key="7">
    <source>
        <dbReference type="PDB" id="2ONK"/>
    </source>
</evidence>
<evidence type="ECO:0007829" key="8">
    <source>
        <dbReference type="PDB" id="2ONS"/>
    </source>
</evidence>
<evidence type="ECO:0007829" key="9">
    <source>
        <dbReference type="PDB" id="3CIJ"/>
    </source>
</evidence>
<dbReference type="EMBL" id="AE000782">
    <property type="protein sequence ID" value="AAB91135.1"/>
    <property type="molecule type" value="Genomic_DNA"/>
</dbReference>
<dbReference type="PIR" id="F69261">
    <property type="entry name" value="F69261"/>
</dbReference>
<dbReference type="RefSeq" id="WP_010877608.1">
    <property type="nucleotide sequence ID" value="NC_000917.1"/>
</dbReference>
<dbReference type="PDB" id="2ONK">
    <property type="method" value="X-ray"/>
    <property type="resolution" value="3.10 A"/>
    <property type="chains" value="E/J=32-342"/>
</dbReference>
<dbReference type="PDB" id="2ONR">
    <property type="method" value="X-ray"/>
    <property type="resolution" value="1.60 A"/>
    <property type="chains" value="A=32-342"/>
</dbReference>
<dbReference type="PDB" id="2ONS">
    <property type="method" value="X-ray"/>
    <property type="resolution" value="1.55 A"/>
    <property type="chains" value="A=32-342"/>
</dbReference>
<dbReference type="PDB" id="3CIJ">
    <property type="method" value="X-ray"/>
    <property type="resolution" value="1.07 A"/>
    <property type="chains" value="A/B=32-323"/>
</dbReference>
<dbReference type="PDBsum" id="2ONK"/>
<dbReference type="PDBsum" id="2ONR"/>
<dbReference type="PDBsum" id="2ONS"/>
<dbReference type="PDBsum" id="3CIJ"/>
<dbReference type="SMR" id="O30142"/>
<dbReference type="DIP" id="DIP-60274N"/>
<dbReference type="IntAct" id="O30142">
    <property type="interactions" value="2"/>
</dbReference>
<dbReference type="STRING" id="224325.AF_0094"/>
<dbReference type="TCDB" id="3.A.1.6.8">
    <property type="family name" value="the atp-binding cassette (abc) superfamily"/>
</dbReference>
<dbReference type="PaxDb" id="224325-AF_0094"/>
<dbReference type="EnsemblBacteria" id="AAB91135">
    <property type="protein sequence ID" value="AAB91135"/>
    <property type="gene ID" value="AF_0094"/>
</dbReference>
<dbReference type="GeneID" id="1483306"/>
<dbReference type="KEGG" id="afu:AF_0094"/>
<dbReference type="eggNOG" id="arCOG00219">
    <property type="taxonomic scope" value="Archaea"/>
</dbReference>
<dbReference type="HOGENOM" id="CLU_055936_0_0_2"/>
<dbReference type="OrthoDB" id="7820at2157"/>
<dbReference type="PhylomeDB" id="O30142"/>
<dbReference type="EvolutionaryTrace" id="O30142"/>
<dbReference type="Proteomes" id="UP000002199">
    <property type="component" value="Chromosome"/>
</dbReference>
<dbReference type="GO" id="GO:0005886">
    <property type="term" value="C:plasma membrane"/>
    <property type="evidence" value="ECO:0007669"/>
    <property type="project" value="UniProtKB-SubCell"/>
</dbReference>
<dbReference type="GO" id="GO:0046872">
    <property type="term" value="F:metal ion binding"/>
    <property type="evidence" value="ECO:0007669"/>
    <property type="project" value="UniProtKB-KW"/>
</dbReference>
<dbReference type="GO" id="GO:0030973">
    <property type="term" value="F:molybdate ion binding"/>
    <property type="evidence" value="ECO:0007669"/>
    <property type="project" value="TreeGrafter"/>
</dbReference>
<dbReference type="GO" id="GO:1901359">
    <property type="term" value="F:tungstate binding"/>
    <property type="evidence" value="ECO:0007669"/>
    <property type="project" value="InterPro"/>
</dbReference>
<dbReference type="GO" id="GO:0015689">
    <property type="term" value="P:molybdate ion transport"/>
    <property type="evidence" value="ECO:0007669"/>
    <property type="project" value="TreeGrafter"/>
</dbReference>
<dbReference type="CDD" id="cd13540">
    <property type="entry name" value="PBP2_ModA_WtpA"/>
    <property type="match status" value="1"/>
</dbReference>
<dbReference type="FunFam" id="3.40.190.10:FF:000440">
    <property type="entry name" value="Uncharacterized solute-binding protein MA_0280"/>
    <property type="match status" value="1"/>
</dbReference>
<dbReference type="Gene3D" id="3.40.190.10">
    <property type="entry name" value="Periplasmic binding protein-like II"/>
    <property type="match status" value="2"/>
</dbReference>
<dbReference type="InterPro" id="IPR022498">
    <property type="entry name" value="ABC_trnspt_W-bd_WtpA"/>
</dbReference>
<dbReference type="InterPro" id="IPR050682">
    <property type="entry name" value="ModA/WtpA"/>
</dbReference>
<dbReference type="NCBIfam" id="NF003196">
    <property type="entry name" value="PRK04168.1"/>
    <property type="match status" value="1"/>
</dbReference>
<dbReference type="NCBIfam" id="TIGR03730">
    <property type="entry name" value="tungstate_WtpA"/>
    <property type="match status" value="1"/>
</dbReference>
<dbReference type="PANTHER" id="PTHR30632">
    <property type="entry name" value="MOLYBDATE-BINDING PERIPLASMIC PROTEIN"/>
    <property type="match status" value="1"/>
</dbReference>
<dbReference type="PANTHER" id="PTHR30632:SF16">
    <property type="entry name" value="MOLYBDATE_TUNGSTATE-BINDING PROTEIN WTPA"/>
    <property type="match status" value="1"/>
</dbReference>
<dbReference type="Pfam" id="PF13531">
    <property type="entry name" value="SBP_bac_11"/>
    <property type="match status" value="1"/>
</dbReference>
<dbReference type="SUPFAM" id="SSF53850">
    <property type="entry name" value="Periplasmic binding protein-like II"/>
    <property type="match status" value="1"/>
</dbReference>
<gene>
    <name type="primary">wtpA</name>
    <name type="synonym">modA</name>
    <name type="ordered locus">AF_0094</name>
</gene>
<accession>O30142</accession>
<comment type="function">
    <text evidence="2">Part of the ABC transporter complex WtpABC involved in molybdate/tungstate import. Binds tungstate and molybdate.</text>
</comment>
<comment type="subunit">
    <text evidence="2">The complex is composed of two ATP-binding proteins (WtpC), two transmembrane proteins (WtpB) and a solute-binding protein (WtpA).</text>
</comment>
<comment type="subcellular location">
    <subcellularLocation>
        <location>Cell membrane</location>
        <topology>Peripheral membrane protein</topology>
    </subcellularLocation>
</comment>
<comment type="similarity">
    <text evidence="3">Belongs to the bacterial solute-binding protein 1 family. WtpA subfamily.</text>
</comment>
<proteinExistence type="evidence at protein level"/>
<reference key="1">
    <citation type="journal article" date="1997" name="Nature">
        <title>The complete genome sequence of the hyperthermophilic, sulphate-reducing archaeon Archaeoglobus fulgidus.</title>
        <authorList>
            <person name="Klenk H.-P."/>
            <person name="Clayton R.A."/>
            <person name="Tomb J.-F."/>
            <person name="White O."/>
            <person name="Nelson K.E."/>
            <person name="Ketchum K.A."/>
            <person name="Dodson R.J."/>
            <person name="Gwinn M.L."/>
            <person name="Hickey E.K."/>
            <person name="Peterson J.D."/>
            <person name="Richardson D.L."/>
            <person name="Kerlavage A.R."/>
            <person name="Graham D.E."/>
            <person name="Kyrpides N.C."/>
            <person name="Fleischmann R.D."/>
            <person name="Quackenbush J."/>
            <person name="Lee N.H."/>
            <person name="Sutton G.G."/>
            <person name="Gill S.R."/>
            <person name="Kirkness E.F."/>
            <person name="Dougherty B.A."/>
            <person name="McKenney K."/>
            <person name="Adams M.D."/>
            <person name="Loftus B.J."/>
            <person name="Peterson S.N."/>
            <person name="Reich C.I."/>
            <person name="McNeil L.K."/>
            <person name="Badger J.H."/>
            <person name="Glodek A."/>
            <person name="Zhou L."/>
            <person name="Overbeek R."/>
            <person name="Gocayne J.D."/>
            <person name="Weidman J.F."/>
            <person name="McDonald L.A."/>
            <person name="Utterback T.R."/>
            <person name="Cotton M.D."/>
            <person name="Spriggs T."/>
            <person name="Artiach P."/>
            <person name="Kaine B.P."/>
            <person name="Sykes S.M."/>
            <person name="Sadow P.W."/>
            <person name="D'Andrea K.P."/>
            <person name="Bowman C."/>
            <person name="Fujii C."/>
            <person name="Garland S.A."/>
            <person name="Mason T.M."/>
            <person name="Olsen G.J."/>
            <person name="Fraser C.M."/>
            <person name="Smith H.O."/>
            <person name="Woese C.R."/>
            <person name="Venter J.C."/>
        </authorList>
    </citation>
    <scope>NUCLEOTIDE SEQUENCE [LARGE SCALE GENOMIC DNA]</scope>
    <source>
        <strain>ATCC 49558 / DSM 4304 / JCM 9628 / NBRC 100126 / VC-16</strain>
    </source>
</reference>
<reference evidence="4 5 6" key="2">
    <citation type="journal article" date="2007" name="Nature">
        <title>Structure of an ABC transporter in complex with its binding protein.</title>
        <authorList>
            <person name="Hollenstein K."/>
            <person name="Frei D.C."/>
            <person name="Locher K.P."/>
        </authorList>
    </citation>
    <scope>X-RAY CRYSTALLOGRAPHY (1.55 ANGSTROMS) OF 32-342 IN COMPLEXES WITH MOLYBDATE; TUNGSTATE; WTPB AND WTPC</scope>
    <scope>SUBUNIT</scope>
</reference>
<organism>
    <name type="scientific">Archaeoglobus fulgidus (strain ATCC 49558 / DSM 4304 / JCM 9628 / NBRC 100126 / VC-16)</name>
    <dbReference type="NCBI Taxonomy" id="224325"/>
    <lineage>
        <taxon>Archaea</taxon>
        <taxon>Methanobacteriati</taxon>
        <taxon>Methanobacteriota</taxon>
        <taxon>Archaeoglobi</taxon>
        <taxon>Archaeoglobales</taxon>
        <taxon>Archaeoglobaceae</taxon>
        <taxon>Archaeoglobus</taxon>
    </lineage>
</organism>
<keyword id="KW-0002">3D-structure</keyword>
<keyword id="KW-1003">Cell membrane</keyword>
<keyword id="KW-0472">Membrane</keyword>
<keyword id="KW-0479">Metal-binding</keyword>
<keyword id="KW-0500">Molybdenum</keyword>
<keyword id="KW-1185">Reference proteome</keyword>
<keyword id="KW-0732">Signal</keyword>
<keyword id="KW-0813">Transport</keyword>
<sequence length="342" mass="38630">MHIGGGVVKIRILILLMLALFLLGCSSNVNTNVKLKVFHAGSLTEPMKAFKRAFEEKHPNVEVQTEAAGSAATIRKVTELGRKADVIATADYTLIQKMMYPEFANWTIMFAKNQIVLAYRNDSRYADEINSQNWYEILKRPDVRFGFSNPNDDPCGYRSLMAIQLAELYYNDPTIFDELVAKNSNLRFSEDNGSYVLRMPSSERIEINKSKIMIRSMEMELIHLVESGELDYFFIYKSVAKQHGFNFVELPVEIDLSSPDYAELYSKVKVVLANGKEVTGKPIVYGITIPKNAENRELAVEFVKLVISEEGQEILRELGQEPLVPPRADTAVPSLKAMVEVS</sequence>